<protein>
    <recommendedName>
        <fullName>Probable E3 ubiquitin-protein ligase hulA</fullName>
        <ecNumber>2.3.2.26</ecNumber>
    </recommendedName>
    <alternativeName>
        <fullName>HECT ubiquitin ligase A</fullName>
    </alternativeName>
    <alternativeName>
        <fullName>HECT-type E3 ubiquitin transferase hulA</fullName>
    </alternativeName>
</protein>
<accession>A2QQ28</accession>
<reference key="1">
    <citation type="journal article" date="2007" name="Nat. Biotechnol.">
        <title>Genome sequencing and analysis of the versatile cell factory Aspergillus niger CBS 513.88.</title>
        <authorList>
            <person name="Pel H.J."/>
            <person name="de Winde J.H."/>
            <person name="Archer D.B."/>
            <person name="Dyer P.S."/>
            <person name="Hofmann G."/>
            <person name="Schaap P.J."/>
            <person name="Turner G."/>
            <person name="de Vries R.P."/>
            <person name="Albang R."/>
            <person name="Albermann K."/>
            <person name="Andersen M.R."/>
            <person name="Bendtsen J.D."/>
            <person name="Benen J.A.E."/>
            <person name="van den Berg M."/>
            <person name="Breestraat S."/>
            <person name="Caddick M.X."/>
            <person name="Contreras R."/>
            <person name="Cornell M."/>
            <person name="Coutinho P.M."/>
            <person name="Danchin E.G.J."/>
            <person name="Debets A.J.M."/>
            <person name="Dekker P."/>
            <person name="van Dijck P.W.M."/>
            <person name="van Dijk A."/>
            <person name="Dijkhuizen L."/>
            <person name="Driessen A.J.M."/>
            <person name="d'Enfert C."/>
            <person name="Geysens S."/>
            <person name="Goosen C."/>
            <person name="Groot G.S.P."/>
            <person name="de Groot P.W.J."/>
            <person name="Guillemette T."/>
            <person name="Henrissat B."/>
            <person name="Herweijer M."/>
            <person name="van den Hombergh J.P.T.W."/>
            <person name="van den Hondel C.A.M.J.J."/>
            <person name="van der Heijden R.T.J.M."/>
            <person name="van der Kaaij R.M."/>
            <person name="Klis F.M."/>
            <person name="Kools H.J."/>
            <person name="Kubicek C.P."/>
            <person name="van Kuyk P.A."/>
            <person name="Lauber J."/>
            <person name="Lu X."/>
            <person name="van der Maarel M.J.E.C."/>
            <person name="Meulenberg R."/>
            <person name="Menke H."/>
            <person name="Mortimer M.A."/>
            <person name="Nielsen J."/>
            <person name="Oliver S.G."/>
            <person name="Olsthoorn M."/>
            <person name="Pal K."/>
            <person name="van Peij N.N.M.E."/>
            <person name="Ram A.F.J."/>
            <person name="Rinas U."/>
            <person name="Roubos J.A."/>
            <person name="Sagt C.M.J."/>
            <person name="Schmoll M."/>
            <person name="Sun J."/>
            <person name="Ussery D."/>
            <person name="Varga J."/>
            <person name="Vervecken W."/>
            <person name="van de Vondervoort P.J.J."/>
            <person name="Wedler H."/>
            <person name="Woesten H.A.B."/>
            <person name="Zeng A.-P."/>
            <person name="van Ooyen A.J.J."/>
            <person name="Visser J."/>
            <person name="Stam H."/>
        </authorList>
    </citation>
    <scope>NUCLEOTIDE SEQUENCE [LARGE SCALE GENOMIC DNA]</scope>
    <source>
        <strain>ATCC MYA-4892 / CBS 513.88 / FGSC A1513</strain>
    </source>
</reference>
<evidence type="ECO:0000250" key="1">
    <source>
        <dbReference type="UniProtKB" id="P39940"/>
    </source>
</evidence>
<evidence type="ECO:0000250" key="2">
    <source>
        <dbReference type="UniProtKB" id="Q5BDP1"/>
    </source>
</evidence>
<evidence type="ECO:0000255" key="3">
    <source>
        <dbReference type="PROSITE-ProRule" id="PRU00041"/>
    </source>
</evidence>
<evidence type="ECO:0000255" key="4">
    <source>
        <dbReference type="PROSITE-ProRule" id="PRU00104"/>
    </source>
</evidence>
<evidence type="ECO:0000255" key="5">
    <source>
        <dbReference type="PROSITE-ProRule" id="PRU00224"/>
    </source>
</evidence>
<evidence type="ECO:0000256" key="6">
    <source>
        <dbReference type="SAM" id="MobiDB-lite"/>
    </source>
</evidence>
<evidence type="ECO:0000305" key="7"/>
<sequence>MGSNLPAQPNLRVTIIAADGLYKRDVFRFPDPFAVATVGGEQTHTTSVIKKTLNPYWNEMFDLRVNEDSILAIQIFDQKKFKKKDQGFLGVINVRIGDVIDLQMGGDEMLTRDLKKSNDNLVVHGKLIINLSTNLSTPIPNQANGLHRSHAQSSTSSGLVPQVSSASHPSVSPGQAEPSAAASNVSLHPQRVPSTTRPTSTVGPVNGGPAPPPNGPQGSRTNLSSFEDSQGRLPAGWERREDNLGRTYYVDHNTRTTTWTRPSSNYNEQTQRTQREANMQLERRAHQSRMLPEDRTGANSPNLQESPQPQPQQAHTPPAGGSASAVSMMATGATTAGTGELPPGWEQRTTPEGRPYFVDHNTRTTTWVDPRRQQYIRMYGHNANGGNTTIQQQPVSQLGPLPSGWEMRLTNTARVYFVDHNTKTTTWDDPRLPSSLDQGVPQYKRDFRRKLIYFRSQPALRIMSGQCHVKVRRNNIFEDSYAEIMRQSASDLKKRLMIKFDGEDGLDYGGLSREFFFLLSHEMFNPFYCLFEYSAHDNYTLQINPHSGVNPEHLNYFKFIGRVVGLAIFHRRFLDSFFIGAFYKMMLRKKVSLQDMEGVDEDLHRNLAWTLENDIEGIIELTFSVDDEKFGERTTIDLKPGGRDIPVTNENKGEYVELVTEWKIVKRVEEQFNAFMSGFNELIPADLVNVFDERELELLIGGIADIDVDDWKKHTDYRGYQEQDEVIQNFWKIVRTWDAEQKSRLLQFTTGTSRIPVNGFKDLQGSDGPRRFTIEKSGDPIALPKSHTCFNRLDLPPYKTHDVLEHKLSIAVEETLGFGQE</sequence>
<name>RSP5_ASPNC</name>
<dbReference type="EC" id="2.3.2.26"/>
<dbReference type="EMBL" id="AM270158">
    <property type="protein sequence ID" value="CAK39787.1"/>
    <property type="molecule type" value="Genomic_DNA"/>
</dbReference>
<dbReference type="RefSeq" id="XP_001392224.1">
    <property type="nucleotide sequence ID" value="XM_001392187.2"/>
</dbReference>
<dbReference type="SMR" id="A2QQ28"/>
<dbReference type="EnsemblFungi" id="CAK39787">
    <property type="protein sequence ID" value="CAK39787"/>
    <property type="gene ID" value="An08g01060"/>
</dbReference>
<dbReference type="GeneID" id="4982420"/>
<dbReference type="KEGG" id="ang:An08g01060"/>
<dbReference type="VEuPathDB" id="FungiDB:An08g01060"/>
<dbReference type="HOGENOM" id="CLU_002173_0_0_1"/>
<dbReference type="UniPathway" id="UPA00143"/>
<dbReference type="Proteomes" id="UP000006706">
    <property type="component" value="Chromosome 8R"/>
</dbReference>
<dbReference type="GO" id="GO:0005934">
    <property type="term" value="C:cellular bud tip"/>
    <property type="evidence" value="ECO:0007669"/>
    <property type="project" value="EnsemblFungi"/>
</dbReference>
<dbReference type="GO" id="GO:0022626">
    <property type="term" value="C:cytosolic ribosome"/>
    <property type="evidence" value="ECO:0007669"/>
    <property type="project" value="EnsemblFungi"/>
</dbReference>
<dbReference type="GO" id="GO:0010008">
    <property type="term" value="C:endosome membrane"/>
    <property type="evidence" value="ECO:0007669"/>
    <property type="project" value="EnsemblFungi"/>
</dbReference>
<dbReference type="GO" id="GO:0005794">
    <property type="term" value="C:Golgi apparatus"/>
    <property type="evidence" value="ECO:0007669"/>
    <property type="project" value="EnsemblFungi"/>
</dbReference>
<dbReference type="GO" id="GO:0005634">
    <property type="term" value="C:nucleus"/>
    <property type="evidence" value="ECO:0007669"/>
    <property type="project" value="EnsemblFungi"/>
</dbReference>
<dbReference type="GO" id="GO:1990306">
    <property type="term" value="C:RSP5-BUL ubiquitin ligase complex"/>
    <property type="evidence" value="ECO:0007669"/>
    <property type="project" value="EnsemblFungi"/>
</dbReference>
<dbReference type="GO" id="GO:0000151">
    <property type="term" value="C:ubiquitin ligase complex"/>
    <property type="evidence" value="ECO:0007669"/>
    <property type="project" value="EnsemblFungi"/>
</dbReference>
<dbReference type="GO" id="GO:0035091">
    <property type="term" value="F:phosphatidylinositol binding"/>
    <property type="evidence" value="ECO:0007669"/>
    <property type="project" value="EnsemblFungi"/>
</dbReference>
<dbReference type="GO" id="GO:0043130">
    <property type="term" value="F:ubiquitin binding"/>
    <property type="evidence" value="ECO:0007669"/>
    <property type="project" value="EnsemblFungi"/>
</dbReference>
<dbReference type="GO" id="GO:0004842">
    <property type="term" value="F:ubiquitin-protein transferase activity"/>
    <property type="evidence" value="ECO:0000250"/>
    <property type="project" value="UniProtKB"/>
</dbReference>
<dbReference type="GO" id="GO:0034450">
    <property type="term" value="F:ubiquitin-ubiquitin ligase activity"/>
    <property type="evidence" value="ECO:0007669"/>
    <property type="project" value="EnsemblFungi"/>
</dbReference>
<dbReference type="GO" id="GO:0034605">
    <property type="term" value="P:cellular response to heat"/>
    <property type="evidence" value="ECO:0007669"/>
    <property type="project" value="EnsemblFungi"/>
</dbReference>
<dbReference type="GO" id="GO:1903577">
    <property type="term" value="P:cellular response to L-arginine"/>
    <property type="evidence" value="ECO:0007669"/>
    <property type="project" value="EnsemblFungi"/>
</dbReference>
<dbReference type="GO" id="GO:0006325">
    <property type="term" value="P:chromatin organization"/>
    <property type="evidence" value="ECO:0007669"/>
    <property type="project" value="EnsemblFungi"/>
</dbReference>
<dbReference type="GO" id="GO:0010994">
    <property type="term" value="P:free ubiquitin chain polymerization"/>
    <property type="evidence" value="ECO:0007669"/>
    <property type="project" value="EnsemblFungi"/>
</dbReference>
<dbReference type="GO" id="GO:0072671">
    <property type="term" value="P:mitochondria-associated ubiquitin-dependent protein catabolic process"/>
    <property type="evidence" value="ECO:0007669"/>
    <property type="project" value="EnsemblFungi"/>
</dbReference>
<dbReference type="GO" id="GO:0007005">
    <property type="term" value="P:mitochondrion organization"/>
    <property type="evidence" value="ECO:0007669"/>
    <property type="project" value="EnsemblFungi"/>
</dbReference>
<dbReference type="GO" id="GO:0070651">
    <property type="term" value="P:nonfunctional rRNA decay"/>
    <property type="evidence" value="ECO:0007669"/>
    <property type="project" value="EnsemblFungi"/>
</dbReference>
<dbReference type="GO" id="GO:0016973">
    <property type="term" value="P:poly(A)+ mRNA export from nucleus"/>
    <property type="evidence" value="ECO:0007669"/>
    <property type="project" value="EnsemblFungi"/>
</dbReference>
<dbReference type="GO" id="GO:0045723">
    <property type="term" value="P:positive regulation of fatty acid biosynthetic process"/>
    <property type="evidence" value="ECO:0007669"/>
    <property type="project" value="EnsemblFungi"/>
</dbReference>
<dbReference type="GO" id="GO:0032436">
    <property type="term" value="P:positive regulation of proteasomal ubiquitin-dependent protein catabolic process"/>
    <property type="evidence" value="ECO:0007669"/>
    <property type="project" value="EnsemblFungi"/>
</dbReference>
<dbReference type="GO" id="GO:0048260">
    <property type="term" value="P:positive regulation of receptor-mediated endocytosis"/>
    <property type="evidence" value="ECO:0007669"/>
    <property type="project" value="EnsemblFungi"/>
</dbReference>
<dbReference type="GO" id="GO:0045944">
    <property type="term" value="P:positive regulation of transcription by RNA polymerase II"/>
    <property type="evidence" value="ECO:0007669"/>
    <property type="project" value="EnsemblFungi"/>
</dbReference>
<dbReference type="GO" id="GO:0070534">
    <property type="term" value="P:protein K63-linked ubiquitination"/>
    <property type="evidence" value="ECO:0007669"/>
    <property type="project" value="EnsemblFungi"/>
</dbReference>
<dbReference type="GO" id="GO:0006515">
    <property type="term" value="P:protein quality control for misfolded or incompletely synthesized proteins"/>
    <property type="evidence" value="ECO:0007669"/>
    <property type="project" value="EnsemblFungi"/>
</dbReference>
<dbReference type="GO" id="GO:0043328">
    <property type="term" value="P:protein transport to vacuole involved in ubiquitin-dependent protein catabolic process via the multivesicular body sorting pathway"/>
    <property type="evidence" value="ECO:0000250"/>
    <property type="project" value="UniProtKB"/>
</dbReference>
<dbReference type="GO" id="GO:0016567">
    <property type="term" value="P:protein ubiquitination"/>
    <property type="evidence" value="ECO:0000250"/>
    <property type="project" value="UniProtKB"/>
</dbReference>
<dbReference type="GO" id="GO:0032956">
    <property type="term" value="P:regulation of actin cytoskeleton organization"/>
    <property type="evidence" value="ECO:0007669"/>
    <property type="project" value="EnsemblFungi"/>
</dbReference>
<dbReference type="GO" id="GO:0010794">
    <property type="term" value="P:regulation of dolichol biosynthetic process"/>
    <property type="evidence" value="ECO:0007669"/>
    <property type="project" value="EnsemblFungi"/>
</dbReference>
<dbReference type="GO" id="GO:0032443">
    <property type="term" value="P:regulation of ergosterol biosynthetic process"/>
    <property type="evidence" value="ECO:0007669"/>
    <property type="project" value="EnsemblFungi"/>
</dbReference>
<dbReference type="GO" id="GO:0010793">
    <property type="term" value="P:regulation of mRNA export from nucleus"/>
    <property type="evidence" value="ECO:0007669"/>
    <property type="project" value="EnsemblFungi"/>
</dbReference>
<dbReference type="GO" id="GO:0006808">
    <property type="term" value="P:regulation of nitrogen utilization"/>
    <property type="evidence" value="ECO:0007669"/>
    <property type="project" value="EnsemblFungi"/>
</dbReference>
<dbReference type="GO" id="GO:0019220">
    <property type="term" value="P:regulation of phosphate metabolic process"/>
    <property type="evidence" value="ECO:0007669"/>
    <property type="project" value="EnsemblFungi"/>
</dbReference>
<dbReference type="GO" id="GO:0032880">
    <property type="term" value="P:regulation of protein localization"/>
    <property type="evidence" value="ECO:0007669"/>
    <property type="project" value="EnsemblFungi"/>
</dbReference>
<dbReference type="GO" id="GO:2000203">
    <property type="term" value="P:regulation of ribosomal large subunit export from nucleus"/>
    <property type="evidence" value="ECO:0007669"/>
    <property type="project" value="EnsemblFungi"/>
</dbReference>
<dbReference type="GO" id="GO:2000232">
    <property type="term" value="P:regulation of rRNA processing"/>
    <property type="evidence" value="ECO:0007669"/>
    <property type="project" value="EnsemblFungi"/>
</dbReference>
<dbReference type="GO" id="GO:2000238">
    <property type="term" value="P:regulation of tRNA export from nucleus"/>
    <property type="evidence" value="ECO:0007669"/>
    <property type="project" value="EnsemblFungi"/>
</dbReference>
<dbReference type="GO" id="GO:2000235">
    <property type="term" value="P:regulation of tRNA processing"/>
    <property type="evidence" value="ECO:0007669"/>
    <property type="project" value="EnsemblFungi"/>
</dbReference>
<dbReference type="GO" id="GO:0010795">
    <property type="term" value="P:regulation of ubiquinone biosynthetic process"/>
    <property type="evidence" value="ECO:0007669"/>
    <property type="project" value="EnsemblFungi"/>
</dbReference>
<dbReference type="GO" id="GO:0034517">
    <property type="term" value="P:ribophagy"/>
    <property type="evidence" value="ECO:0007669"/>
    <property type="project" value="EnsemblFungi"/>
</dbReference>
<dbReference type="GO" id="GO:0070086">
    <property type="term" value="P:ubiquitin-dependent endocytosis"/>
    <property type="evidence" value="ECO:0007669"/>
    <property type="project" value="EnsemblFungi"/>
</dbReference>
<dbReference type="CDD" id="cd08382">
    <property type="entry name" value="C2_Smurf-like"/>
    <property type="match status" value="1"/>
</dbReference>
<dbReference type="CDD" id="cd00078">
    <property type="entry name" value="HECTc"/>
    <property type="match status" value="1"/>
</dbReference>
<dbReference type="CDD" id="cd00201">
    <property type="entry name" value="WW"/>
    <property type="match status" value="3"/>
</dbReference>
<dbReference type="FunFam" id="2.20.70.10:FF:000011">
    <property type="entry name" value="E3 ubiquitin-protein ligase"/>
    <property type="match status" value="1"/>
</dbReference>
<dbReference type="FunFam" id="2.20.70.10:FF:000017">
    <property type="entry name" value="E3 ubiquitin-protein ligase"/>
    <property type="match status" value="1"/>
</dbReference>
<dbReference type="FunFam" id="2.20.70.10:FF:000053">
    <property type="entry name" value="E3 ubiquitin-protein ligase"/>
    <property type="match status" value="1"/>
</dbReference>
<dbReference type="FunFam" id="2.60.40.150:FF:000074">
    <property type="entry name" value="E3 ubiquitin-protein ligase"/>
    <property type="match status" value="1"/>
</dbReference>
<dbReference type="FunFam" id="3.90.1750.10:FF:000005">
    <property type="entry name" value="E3 ubiquitin-protein ligase"/>
    <property type="match status" value="1"/>
</dbReference>
<dbReference type="FunFam" id="3.30.2160.10:FF:000001">
    <property type="entry name" value="E3 ubiquitin-protein ligase NEDD4-like"/>
    <property type="match status" value="1"/>
</dbReference>
<dbReference type="FunFam" id="3.30.2410.10:FF:000001">
    <property type="entry name" value="E3 ubiquitin-protein ligase NEDD4-like"/>
    <property type="match status" value="1"/>
</dbReference>
<dbReference type="Gene3D" id="2.20.70.10">
    <property type="match status" value="2"/>
</dbReference>
<dbReference type="Gene3D" id="2.60.40.150">
    <property type="entry name" value="C2 domain"/>
    <property type="match status" value="1"/>
</dbReference>
<dbReference type="Gene3D" id="3.30.2160.10">
    <property type="entry name" value="Hect, E3 ligase catalytic domain"/>
    <property type="match status" value="1"/>
</dbReference>
<dbReference type="Gene3D" id="3.30.2410.10">
    <property type="entry name" value="Hect, E3 ligase catalytic domain"/>
    <property type="match status" value="1"/>
</dbReference>
<dbReference type="Gene3D" id="3.90.1750.10">
    <property type="entry name" value="Hect, E3 ligase catalytic domains"/>
    <property type="match status" value="1"/>
</dbReference>
<dbReference type="InterPro" id="IPR000008">
    <property type="entry name" value="C2_dom"/>
</dbReference>
<dbReference type="InterPro" id="IPR035892">
    <property type="entry name" value="C2_domain_sf"/>
</dbReference>
<dbReference type="InterPro" id="IPR024928">
    <property type="entry name" value="E3_ub_ligase_SMURF1"/>
</dbReference>
<dbReference type="InterPro" id="IPR050409">
    <property type="entry name" value="E3_ubiq-protein_ligase"/>
</dbReference>
<dbReference type="InterPro" id="IPR000569">
    <property type="entry name" value="HECT_dom"/>
</dbReference>
<dbReference type="InterPro" id="IPR035983">
    <property type="entry name" value="Hect_E3_ubiquitin_ligase"/>
</dbReference>
<dbReference type="InterPro" id="IPR001202">
    <property type="entry name" value="WW_dom"/>
</dbReference>
<dbReference type="InterPro" id="IPR036020">
    <property type="entry name" value="WW_dom_sf"/>
</dbReference>
<dbReference type="PANTHER" id="PTHR11254:SF440">
    <property type="entry name" value="E3 UBIQUITIN-PROTEIN LIGASE NEDD-4"/>
    <property type="match status" value="1"/>
</dbReference>
<dbReference type="PANTHER" id="PTHR11254">
    <property type="entry name" value="HECT DOMAIN UBIQUITIN-PROTEIN LIGASE"/>
    <property type="match status" value="1"/>
</dbReference>
<dbReference type="Pfam" id="PF00168">
    <property type="entry name" value="C2"/>
    <property type="match status" value="1"/>
</dbReference>
<dbReference type="Pfam" id="PF00632">
    <property type="entry name" value="HECT"/>
    <property type="match status" value="1"/>
</dbReference>
<dbReference type="Pfam" id="PF00397">
    <property type="entry name" value="WW"/>
    <property type="match status" value="3"/>
</dbReference>
<dbReference type="PIRSF" id="PIRSF001569">
    <property type="entry name" value="E3_ub_ligase_SMURF1"/>
    <property type="match status" value="1"/>
</dbReference>
<dbReference type="SMART" id="SM00239">
    <property type="entry name" value="C2"/>
    <property type="match status" value="1"/>
</dbReference>
<dbReference type="SMART" id="SM00119">
    <property type="entry name" value="HECTc"/>
    <property type="match status" value="1"/>
</dbReference>
<dbReference type="SMART" id="SM00456">
    <property type="entry name" value="WW"/>
    <property type="match status" value="3"/>
</dbReference>
<dbReference type="SUPFAM" id="SSF49562">
    <property type="entry name" value="C2 domain (Calcium/lipid-binding domain, CaLB)"/>
    <property type="match status" value="1"/>
</dbReference>
<dbReference type="SUPFAM" id="SSF56204">
    <property type="entry name" value="Hect, E3 ligase catalytic domain"/>
    <property type="match status" value="1"/>
</dbReference>
<dbReference type="SUPFAM" id="SSF51045">
    <property type="entry name" value="WW domain"/>
    <property type="match status" value="3"/>
</dbReference>
<dbReference type="PROSITE" id="PS50004">
    <property type="entry name" value="C2"/>
    <property type="match status" value="1"/>
</dbReference>
<dbReference type="PROSITE" id="PS50237">
    <property type="entry name" value="HECT"/>
    <property type="match status" value="1"/>
</dbReference>
<dbReference type="PROSITE" id="PS01159">
    <property type="entry name" value="WW_DOMAIN_1"/>
    <property type="match status" value="3"/>
</dbReference>
<dbReference type="PROSITE" id="PS50020">
    <property type="entry name" value="WW_DOMAIN_2"/>
    <property type="match status" value="3"/>
</dbReference>
<organism>
    <name type="scientific">Aspergillus niger (strain ATCC MYA-4892 / CBS 513.88 / FGSC A1513)</name>
    <dbReference type="NCBI Taxonomy" id="425011"/>
    <lineage>
        <taxon>Eukaryota</taxon>
        <taxon>Fungi</taxon>
        <taxon>Dikarya</taxon>
        <taxon>Ascomycota</taxon>
        <taxon>Pezizomycotina</taxon>
        <taxon>Eurotiomycetes</taxon>
        <taxon>Eurotiomycetidae</taxon>
        <taxon>Eurotiales</taxon>
        <taxon>Aspergillaceae</taxon>
        <taxon>Aspergillus</taxon>
        <taxon>Aspergillus subgen. Circumdati</taxon>
    </lineage>
</organism>
<comment type="function">
    <text evidence="2">E3 ubiquitin-protein ligase which accepts ubiquitin from an E2 ubiquitin-conjugating enzyme in the form of a thioester and then directly transfers the ubiquitin to targeted substrates. Probably involved in the regulatory network controlling carbon source utilization.</text>
</comment>
<comment type="catalytic activity">
    <reaction>
        <text>S-ubiquitinyl-[E2 ubiquitin-conjugating enzyme]-L-cysteine + [acceptor protein]-L-lysine = [E2 ubiquitin-conjugating enzyme]-L-cysteine + N(6)-ubiquitinyl-[acceptor protein]-L-lysine.</text>
        <dbReference type="EC" id="2.3.2.26"/>
    </reaction>
</comment>
<comment type="pathway">
    <text>Protein modification; protein ubiquitination.</text>
</comment>
<comment type="subunit">
    <text evidence="2">Interacts with creD.</text>
</comment>
<comment type="subcellular location">
    <subcellularLocation>
        <location evidence="1">Cytoplasm</location>
    </subcellularLocation>
</comment>
<comment type="similarity">
    <text evidence="7">Belongs to the RSP5/NEDD4 family.</text>
</comment>
<proteinExistence type="inferred from homology"/>
<keyword id="KW-0963">Cytoplasm</keyword>
<keyword id="KW-1185">Reference proteome</keyword>
<keyword id="KW-0677">Repeat</keyword>
<keyword id="KW-0808">Transferase</keyword>
<keyword id="KW-0833">Ubl conjugation pathway</keyword>
<feature type="chain" id="PRO_0000395707" description="Probable E3 ubiquitin-protein ligase hulA">
    <location>
        <begin position="1"/>
        <end position="821"/>
    </location>
</feature>
<feature type="domain" description="C2" evidence="3">
    <location>
        <begin position="1"/>
        <end position="112"/>
    </location>
</feature>
<feature type="domain" description="WW 1" evidence="5">
    <location>
        <begin position="231"/>
        <end position="264"/>
    </location>
</feature>
<feature type="domain" description="WW 2" evidence="5">
    <location>
        <begin position="339"/>
        <end position="372"/>
    </location>
</feature>
<feature type="domain" description="WW 3" evidence="5">
    <location>
        <begin position="399"/>
        <end position="432"/>
    </location>
</feature>
<feature type="domain" description="HECT" evidence="4">
    <location>
        <begin position="488"/>
        <end position="821"/>
    </location>
</feature>
<feature type="region of interest" description="Disordered" evidence="6">
    <location>
        <begin position="140"/>
        <end position="240"/>
    </location>
</feature>
<feature type="region of interest" description="Disordered" evidence="6">
    <location>
        <begin position="255"/>
        <end position="359"/>
    </location>
</feature>
<feature type="compositionally biased region" description="Polar residues" evidence="6">
    <location>
        <begin position="151"/>
        <end position="173"/>
    </location>
</feature>
<feature type="compositionally biased region" description="Polar residues" evidence="6">
    <location>
        <begin position="181"/>
        <end position="201"/>
    </location>
</feature>
<feature type="compositionally biased region" description="Polar residues" evidence="6">
    <location>
        <begin position="217"/>
        <end position="228"/>
    </location>
</feature>
<feature type="compositionally biased region" description="Polar residues" evidence="6">
    <location>
        <begin position="255"/>
        <end position="272"/>
    </location>
</feature>
<feature type="compositionally biased region" description="Basic and acidic residues" evidence="6">
    <location>
        <begin position="281"/>
        <end position="296"/>
    </location>
</feature>
<feature type="compositionally biased region" description="Polar residues" evidence="6">
    <location>
        <begin position="297"/>
        <end position="306"/>
    </location>
</feature>
<feature type="compositionally biased region" description="Low complexity" evidence="6">
    <location>
        <begin position="311"/>
        <end position="339"/>
    </location>
</feature>
<feature type="active site" description="Glycyl thioester intermediate" evidence="4">
    <location>
        <position position="789"/>
    </location>
</feature>
<gene>
    <name type="primary">hulA</name>
    <name type="ORF">An08g01060</name>
</gene>